<keyword id="KW-0997">Cell inner membrane</keyword>
<keyword id="KW-1003">Cell membrane</keyword>
<keyword id="KW-0472">Membrane</keyword>
<keyword id="KW-0812">Transmembrane</keyword>
<keyword id="KW-1133">Transmembrane helix</keyword>
<name>Y1416_CHESB</name>
<accession>Q11IG3</accession>
<feature type="chain" id="PRO_1000064845" description="UPF0283 membrane protein Meso_1416">
    <location>
        <begin position="1"/>
        <end position="354"/>
    </location>
</feature>
<feature type="transmembrane region" description="Helical" evidence="1">
    <location>
        <begin position="71"/>
        <end position="91"/>
    </location>
</feature>
<feature type="transmembrane region" description="Helical" evidence="1">
    <location>
        <begin position="105"/>
        <end position="125"/>
    </location>
</feature>
<feature type="region of interest" description="Disordered" evidence="2">
    <location>
        <begin position="1"/>
        <end position="28"/>
    </location>
</feature>
<organism>
    <name type="scientific">Chelativorans sp. (strain BNC1)</name>
    <dbReference type="NCBI Taxonomy" id="266779"/>
    <lineage>
        <taxon>Bacteria</taxon>
        <taxon>Pseudomonadati</taxon>
        <taxon>Pseudomonadota</taxon>
        <taxon>Alphaproteobacteria</taxon>
        <taxon>Hyphomicrobiales</taxon>
        <taxon>Phyllobacteriaceae</taxon>
        <taxon>Chelativorans</taxon>
    </lineage>
</organism>
<evidence type="ECO:0000255" key="1">
    <source>
        <dbReference type="HAMAP-Rule" id="MF_01085"/>
    </source>
</evidence>
<evidence type="ECO:0000256" key="2">
    <source>
        <dbReference type="SAM" id="MobiDB-lite"/>
    </source>
</evidence>
<sequence>MSEPRRPAAFRIEPAPSPSPEATREDVRKPRAIRVDEAVKITPAEIDIFDSLETEASAPPPAAAPKRRSRLGAVFVAALGMLVSLAAGLWADSLIRDLFSRADWLGWLGAALVAVAALALFAIVVREAIAVARLASVERMRRRSDDAYERDDARQARAVIADLSSLLASHPDTAAGRRQLEQLEGDVIDGRDLLRIAEKELLAPLDKRAQKLVLDAAKRVSVVTAVSPRALMDVGYVIFEAVRLLRRLSELYCGRPGFFGFLRLSRNVLAHLAVTGSMAMGDTIVQQIVGHGIAARLSARLGEGVVNGMMTARIGMAAISAIRPLSFRAVERPGIGDFLKALTQFAAKTDGKRT</sequence>
<reference key="1">
    <citation type="submission" date="2006-06" db="EMBL/GenBank/DDBJ databases">
        <title>Complete sequence of chromosome of Mesorhizobium sp. BNC1.</title>
        <authorList>
            <consortium name="US DOE Joint Genome Institute"/>
            <person name="Copeland A."/>
            <person name="Lucas S."/>
            <person name="Lapidus A."/>
            <person name="Barry K."/>
            <person name="Detter J.C."/>
            <person name="Glavina del Rio T."/>
            <person name="Hammon N."/>
            <person name="Israni S."/>
            <person name="Dalin E."/>
            <person name="Tice H."/>
            <person name="Pitluck S."/>
            <person name="Chertkov O."/>
            <person name="Brettin T."/>
            <person name="Bruce D."/>
            <person name="Han C."/>
            <person name="Tapia R."/>
            <person name="Gilna P."/>
            <person name="Schmutz J."/>
            <person name="Larimer F."/>
            <person name="Land M."/>
            <person name="Hauser L."/>
            <person name="Kyrpides N."/>
            <person name="Mikhailova N."/>
            <person name="Richardson P."/>
        </authorList>
    </citation>
    <scope>NUCLEOTIDE SEQUENCE [LARGE SCALE GENOMIC DNA]</scope>
    <source>
        <strain>BNC1</strain>
    </source>
</reference>
<dbReference type="EMBL" id="CP000390">
    <property type="protein sequence ID" value="ABG62812.1"/>
    <property type="molecule type" value="Genomic_DNA"/>
</dbReference>
<dbReference type="STRING" id="266779.Meso_1416"/>
<dbReference type="KEGG" id="mes:Meso_1416"/>
<dbReference type="eggNOG" id="COG3768">
    <property type="taxonomic scope" value="Bacteria"/>
</dbReference>
<dbReference type="HOGENOM" id="CLU_057693_1_0_5"/>
<dbReference type="OrthoDB" id="9816060at2"/>
<dbReference type="GO" id="GO:0005886">
    <property type="term" value="C:plasma membrane"/>
    <property type="evidence" value="ECO:0007669"/>
    <property type="project" value="UniProtKB-SubCell"/>
</dbReference>
<dbReference type="HAMAP" id="MF_01085">
    <property type="entry name" value="UPF0283"/>
    <property type="match status" value="1"/>
</dbReference>
<dbReference type="InterPro" id="IPR021147">
    <property type="entry name" value="DUF697"/>
</dbReference>
<dbReference type="InterPro" id="IPR006507">
    <property type="entry name" value="UPF0283"/>
</dbReference>
<dbReference type="NCBIfam" id="TIGR01620">
    <property type="entry name" value="hyp_HI0043"/>
    <property type="match status" value="1"/>
</dbReference>
<dbReference type="PANTHER" id="PTHR39342">
    <property type="entry name" value="UPF0283 MEMBRANE PROTEIN YCJF"/>
    <property type="match status" value="1"/>
</dbReference>
<dbReference type="PANTHER" id="PTHR39342:SF1">
    <property type="entry name" value="UPF0283 MEMBRANE PROTEIN YCJF"/>
    <property type="match status" value="1"/>
</dbReference>
<dbReference type="Pfam" id="PF05128">
    <property type="entry name" value="DUF697"/>
    <property type="match status" value="1"/>
</dbReference>
<proteinExistence type="inferred from homology"/>
<protein>
    <recommendedName>
        <fullName evidence="1">UPF0283 membrane protein Meso_1416</fullName>
    </recommendedName>
</protein>
<comment type="subcellular location">
    <subcellularLocation>
        <location evidence="1">Cell inner membrane</location>
        <topology evidence="1">Multi-pass membrane protein</topology>
    </subcellularLocation>
</comment>
<comment type="similarity">
    <text evidence="1">Belongs to the UPF0283 family.</text>
</comment>
<gene>
    <name type="ordered locus">Meso_1416</name>
</gene>